<reference evidence="6" key="1">
    <citation type="journal article" date="2016" name="J. Biol. Chem.">
        <title>Der f 34, a Novel Major House Dust Mite Allergen Belonging to a Highly Conserved Rid/YjgF/YER057c/UK114 Family of Imine Deaminases.</title>
        <authorList>
            <person name="ElRamlawy K.G."/>
            <person name="Fujimura T."/>
            <person name="Baba K."/>
            <person name="Kim J.W."/>
            <person name="Kawamoto C."/>
            <person name="Isobe T."/>
            <person name="Abe T."/>
            <person name="Hodge-Hanson K."/>
            <person name="Downs D.M."/>
            <person name="Refaat I.H."/>
            <person name="Beshr Al-Azhary D."/>
            <person name="Aki T."/>
            <person name="Asaoku Y."/>
            <person name="Hayashi T."/>
            <person name="Katsutani T."/>
            <person name="Tsuboi S."/>
            <person name="Ono K."/>
            <person name="Kawamoto S."/>
        </authorList>
    </citation>
    <scope>NUCLEOTIDE SEQUENCE [MRNA]</scope>
    <scope>PROTEIN SEQUENCE OF 2-9</scope>
    <scope>FUNCTION</scope>
    <scope>IDENTIFICATION BY MASS SPECTROMETRY</scope>
    <scope>ALLERGEN</scope>
    <scope>MUTAGENESIS OF TYR-19; GLY-33; ASN-59; ASN-91; ARG-105; PRO-114 AND GLU-120</scope>
</reference>
<feature type="initiator methionine" description="Removed" evidence="2">
    <location>
        <position position="1"/>
    </location>
</feature>
<feature type="chain" id="PRO_0000447664" description="2-iminobutanoate/2-iminopropanoate deaminase" evidence="5">
    <location>
        <begin position="2"/>
        <end position="128"/>
    </location>
</feature>
<feature type="mutagenesis site" description="Loss of imine deaminase activity; when associated with A-33; A-59; A-91; A-105; A-114 and A-120." evidence="2">
    <original>Y</original>
    <variation>A</variation>
    <location>
        <position position="19"/>
    </location>
</feature>
<feature type="mutagenesis site" description="Loss of imine deaminase activity; when associated with A-19; A-59; A-91; A-105; A-114 and A-120." evidence="2">
    <original>G</original>
    <variation>A</variation>
    <location>
        <position position="33"/>
    </location>
</feature>
<feature type="mutagenesis site" description="Loss of imine deaminase activity; when associated with A-19; A-33; A-91; A-105; A-114 and A-120." evidence="2">
    <original>N</original>
    <variation>A</variation>
    <location>
        <position position="59"/>
    </location>
</feature>
<feature type="mutagenesis site" description="Loss of imine deaminase activity; when associated with A-19; A-33; A-59; A-105; A-114 and A-120." evidence="2">
    <original>N</original>
    <variation>A</variation>
    <location>
        <position position="91"/>
    </location>
</feature>
<feature type="mutagenesis site" description="Loss of imine deaminase activity; when associated with A-19; A-33; A-59; A-91; A-114 and A-120." evidence="2">
    <original>R</original>
    <variation>A</variation>
    <location>
        <position position="105"/>
    </location>
</feature>
<feature type="mutagenesis site" description="Loss of imine deaminase activity; when associated with A-19; A-33; A-59; A-91; A-105 and A-120." evidence="2">
    <original>P</original>
    <variation>A</variation>
    <location>
        <position position="114"/>
    </location>
</feature>
<feature type="mutagenesis site" description="Loss of imine deaminase activity; when associated with A-19; A-33; A-59; A-91; A-105 and A-114." evidence="2">
    <original>E</original>
    <variation>A</variation>
    <location>
        <position position="120"/>
    </location>
</feature>
<keyword id="KW-0020">Allergen</keyword>
<keyword id="KW-0963">Cytoplasm</keyword>
<keyword id="KW-0903">Direct protein sequencing</keyword>
<keyword id="KW-0378">Hydrolase</keyword>
<comment type="function">
    <text evidence="1 2">Catalyzes the hydrolytic deamination of enamine/imine intermediates that form during the course of normal metabolism (PubMed:27539850). May facilitate the release of ammonia from these potentially toxic reactive metabolites, reducing their impact on cellular components. It may act on enamine/imine intermediates formed by several types of pyridoxal-5'-phosphate-dependent dehydratases including L-threonine dehydratase (By similarity). Preferentially digests Leu and Met in cooperation with L-amino acid oxidase, but digests Phe poorly (PubMed:27539850).</text>
</comment>
<comment type="catalytic activity">
    <reaction evidence="5">
        <text>2-iminobutanoate + H2O = 2-oxobutanoate + NH4(+)</text>
        <dbReference type="Rhea" id="RHEA:39975"/>
        <dbReference type="ChEBI" id="CHEBI:15377"/>
        <dbReference type="ChEBI" id="CHEBI:16763"/>
        <dbReference type="ChEBI" id="CHEBI:28938"/>
        <dbReference type="ChEBI" id="CHEBI:76545"/>
        <dbReference type="EC" id="3.5.99.10"/>
    </reaction>
</comment>
<comment type="catalytic activity">
    <reaction evidence="5">
        <text>2-iminopropanoate + H2O = pyruvate + NH4(+)</text>
        <dbReference type="Rhea" id="RHEA:40671"/>
        <dbReference type="ChEBI" id="CHEBI:15361"/>
        <dbReference type="ChEBI" id="CHEBI:15377"/>
        <dbReference type="ChEBI" id="CHEBI:28938"/>
        <dbReference type="ChEBI" id="CHEBI:44400"/>
        <dbReference type="EC" id="3.5.99.10"/>
    </reaction>
</comment>
<comment type="subcellular location">
    <subcellularLocation>
        <location evidence="1">Cytoplasm</location>
    </subcellularLocation>
</comment>
<comment type="allergen">
    <text evidence="2">Causes an allergic reaction in human. Binds to IgE in 68% of the 19 patients tested allergic to house dust mite (HDM).</text>
</comment>
<comment type="similarity">
    <text evidence="4">Belongs to the RutC family.</text>
</comment>
<dbReference type="EC" id="3.5.99.10" evidence="5"/>
<dbReference type="EMBL" id="LC120618">
    <property type="protein sequence ID" value="BAV90601.1"/>
    <property type="molecule type" value="mRNA"/>
</dbReference>
<dbReference type="SMR" id="A0A1J1DL12"/>
<dbReference type="Allergome" id="11968">
    <property type="allergen name" value="Der f 34"/>
</dbReference>
<dbReference type="Allergome" id="11969">
    <property type="allergen name" value="Der f 34.0101"/>
</dbReference>
<dbReference type="GO" id="GO:0005737">
    <property type="term" value="C:cytoplasm"/>
    <property type="evidence" value="ECO:0000250"/>
    <property type="project" value="UniProtKB"/>
</dbReference>
<dbReference type="GO" id="GO:0005829">
    <property type="term" value="C:cytosol"/>
    <property type="evidence" value="ECO:0007669"/>
    <property type="project" value="TreeGrafter"/>
</dbReference>
<dbReference type="GO" id="GO:0120242">
    <property type="term" value="F:2-iminobutanoate deaminase activity"/>
    <property type="evidence" value="ECO:0007669"/>
    <property type="project" value="RHEA"/>
</dbReference>
<dbReference type="GO" id="GO:0120243">
    <property type="term" value="F:2-iminopropanoate deaminase activity"/>
    <property type="evidence" value="ECO:0007669"/>
    <property type="project" value="RHEA"/>
</dbReference>
<dbReference type="GO" id="GO:0019239">
    <property type="term" value="F:deaminase activity"/>
    <property type="evidence" value="ECO:0000314"/>
    <property type="project" value="UniProtKB"/>
</dbReference>
<dbReference type="GO" id="GO:0046360">
    <property type="term" value="P:2-oxobutyrate biosynthetic process"/>
    <property type="evidence" value="ECO:0000314"/>
    <property type="project" value="UniProtKB"/>
</dbReference>
<dbReference type="CDD" id="cd00448">
    <property type="entry name" value="YjgF_YER057c_UK114_family"/>
    <property type="match status" value="1"/>
</dbReference>
<dbReference type="FunFam" id="3.30.1330.40:FF:000001">
    <property type="entry name" value="L-PSP family endoribonuclease"/>
    <property type="match status" value="1"/>
</dbReference>
<dbReference type="Gene3D" id="3.30.1330.40">
    <property type="entry name" value="RutC-like"/>
    <property type="match status" value="1"/>
</dbReference>
<dbReference type="InterPro" id="IPR006056">
    <property type="entry name" value="RidA"/>
</dbReference>
<dbReference type="InterPro" id="IPR019897">
    <property type="entry name" value="RidA_CS"/>
</dbReference>
<dbReference type="InterPro" id="IPR035959">
    <property type="entry name" value="RutC-like_sf"/>
</dbReference>
<dbReference type="InterPro" id="IPR006175">
    <property type="entry name" value="YjgF/YER057c/UK114"/>
</dbReference>
<dbReference type="NCBIfam" id="TIGR00004">
    <property type="entry name" value="Rid family detoxifying hydrolase"/>
    <property type="match status" value="1"/>
</dbReference>
<dbReference type="PANTHER" id="PTHR11803">
    <property type="entry name" value="2-IMINOBUTANOATE/2-IMINOPROPANOATE DEAMINASE RIDA"/>
    <property type="match status" value="1"/>
</dbReference>
<dbReference type="PANTHER" id="PTHR11803:SF39">
    <property type="entry name" value="2-IMINOBUTANOATE_2-IMINOPROPANOATE DEAMINASE"/>
    <property type="match status" value="1"/>
</dbReference>
<dbReference type="Pfam" id="PF01042">
    <property type="entry name" value="Ribonuc_L-PSP"/>
    <property type="match status" value="1"/>
</dbReference>
<dbReference type="SUPFAM" id="SSF55298">
    <property type="entry name" value="YjgF-like"/>
    <property type="match status" value="1"/>
</dbReference>
<dbReference type="PROSITE" id="PS01094">
    <property type="entry name" value="UPF0076"/>
    <property type="match status" value="1"/>
</dbReference>
<gene>
    <name evidence="3 6" type="primary">MAG133</name>
</gene>
<sequence length="128" mass="13998">MSPKRIISTPLAPQPIGPYSQAVQVGNTVYLSGQIGMNVRTNEMVTGPIRDEAQQAFTNMKAVVEASGAKMSDVVKVNIFIRNFNDFPAINDVMKEFFQSPFPARSTVGVAELPKNARVEIESIVVIE</sequence>
<accession>A0A1J1DL12</accession>
<evidence type="ECO:0000250" key="1">
    <source>
        <dbReference type="UniProtKB" id="P52758"/>
    </source>
</evidence>
<evidence type="ECO:0000269" key="2">
    <source>
    </source>
</evidence>
<evidence type="ECO:0000303" key="3">
    <source>
    </source>
</evidence>
<evidence type="ECO:0000305" key="4"/>
<evidence type="ECO:0000305" key="5">
    <source>
    </source>
</evidence>
<evidence type="ECO:0000312" key="6">
    <source>
        <dbReference type="EMBL" id="BAV90601.1"/>
    </source>
</evidence>
<organism evidence="6">
    <name type="scientific">Dermatophagoides farinae</name>
    <name type="common">American house dust mite</name>
    <dbReference type="NCBI Taxonomy" id="6954"/>
    <lineage>
        <taxon>Eukaryota</taxon>
        <taxon>Metazoa</taxon>
        <taxon>Ecdysozoa</taxon>
        <taxon>Arthropoda</taxon>
        <taxon>Chelicerata</taxon>
        <taxon>Arachnida</taxon>
        <taxon>Acari</taxon>
        <taxon>Acariformes</taxon>
        <taxon>Sarcoptiformes</taxon>
        <taxon>Astigmata</taxon>
        <taxon>Psoroptidia</taxon>
        <taxon>Analgoidea</taxon>
        <taxon>Pyroglyphidae</taxon>
        <taxon>Dermatophagoidinae</taxon>
        <taxon>Dermatophagoides</taxon>
    </lineage>
</organism>
<protein>
    <recommendedName>
        <fullName evidence="4">2-iminobutanoate/2-iminopropanoate deaminase</fullName>
        <ecNumber evidence="5">3.5.99.10</ecNumber>
    </recommendedName>
    <alternativeName>
        <fullName evidence="3">Allergen Der f 34</fullName>
    </alternativeName>
    <alternativeName>
        <fullName evidence="3 6">Enamine/imine deaminase</fullName>
    </alternativeName>
    <allergenName evidence="4">Der f 34.0101</allergenName>
</protein>
<name>RIDA_DERFA</name>
<proteinExistence type="evidence at protein level"/>